<reference key="1">
    <citation type="journal article" date="2008" name="Genomics">
        <title>Evolution in the laboratory: the genome of Halobacterium salinarum strain R1 compared to that of strain NRC-1.</title>
        <authorList>
            <person name="Pfeiffer F."/>
            <person name="Schuster S.C."/>
            <person name="Broicher A."/>
            <person name="Falb M."/>
            <person name="Palm P."/>
            <person name="Rodewald K."/>
            <person name="Ruepp A."/>
            <person name="Soppa J."/>
            <person name="Tittor J."/>
            <person name="Oesterhelt D."/>
        </authorList>
    </citation>
    <scope>NUCLEOTIDE SEQUENCE [LARGE SCALE GENOMIC DNA]</scope>
    <source>
        <strain>ATCC 29341 / DSM 671 / R1</strain>
    </source>
</reference>
<organism>
    <name type="scientific">Halobacterium salinarum (strain ATCC 29341 / DSM 671 / R1)</name>
    <dbReference type="NCBI Taxonomy" id="478009"/>
    <lineage>
        <taxon>Archaea</taxon>
        <taxon>Methanobacteriati</taxon>
        <taxon>Methanobacteriota</taxon>
        <taxon>Stenosarchaea group</taxon>
        <taxon>Halobacteria</taxon>
        <taxon>Halobacteriales</taxon>
        <taxon>Halobacteriaceae</taxon>
        <taxon>Halobacterium</taxon>
        <taxon>Halobacterium salinarum NRC-34001</taxon>
    </lineage>
</organism>
<protein>
    <recommendedName>
        <fullName>Pyruvoyl-dependent arginine decarboxylase</fullName>
        <shortName>PvlArgDC</shortName>
        <ecNumber>4.1.1.19</ecNumber>
    </recommendedName>
    <component>
        <recommendedName>
            <fullName>Pyruvoyl-dependent arginine decarboxylase subunit beta</fullName>
        </recommendedName>
    </component>
    <component>
        <recommendedName>
            <fullName>Pyruvoyl-dependent arginine decarboxylase subunit alpha</fullName>
        </recommendedName>
    </component>
</protein>
<feature type="chain" id="PRO_1000145468" description="Pyruvoyl-dependent arginine decarboxylase subunit beta" evidence="1">
    <location>
        <begin position="1"/>
        <end position="38"/>
    </location>
</feature>
<feature type="chain" id="PRO_1000145469" description="Pyruvoyl-dependent arginine decarboxylase subunit alpha" evidence="1">
    <location>
        <begin position="39"/>
        <end position="160"/>
    </location>
</feature>
<feature type="site" description="Cleavage (non-hydrolytic)" evidence="1">
    <location>
        <begin position="38"/>
        <end position="39"/>
    </location>
</feature>
<feature type="modified residue" description="Pyruvic acid (Ser)" evidence="1">
    <location>
        <position position="39"/>
    </location>
</feature>
<keyword id="KW-0210">Decarboxylase</keyword>
<keyword id="KW-0456">Lyase</keyword>
<keyword id="KW-0670">Pyruvate</keyword>
<dbReference type="EC" id="4.1.1.19"/>
<dbReference type="EMBL" id="AM774415">
    <property type="protein sequence ID" value="CAP14466.1"/>
    <property type="molecule type" value="Genomic_DNA"/>
</dbReference>
<dbReference type="RefSeq" id="WP_010903471.1">
    <property type="nucleotide sequence ID" value="NC_010364.1"/>
</dbReference>
<dbReference type="SMR" id="B0R6U7"/>
<dbReference type="EnsemblBacteria" id="CAP14466">
    <property type="protein sequence ID" value="CAP14466"/>
    <property type="gene ID" value="OE_3803R"/>
</dbReference>
<dbReference type="KEGG" id="hsl:OE_3803R"/>
<dbReference type="HOGENOM" id="CLU_134253_0_0_2"/>
<dbReference type="Proteomes" id="UP000001321">
    <property type="component" value="Chromosome"/>
</dbReference>
<dbReference type="GO" id="GO:0008792">
    <property type="term" value="F:arginine decarboxylase activity"/>
    <property type="evidence" value="ECO:0007669"/>
    <property type="project" value="UniProtKB-EC"/>
</dbReference>
<dbReference type="GO" id="GO:0006527">
    <property type="term" value="P:arginine catabolic process"/>
    <property type="evidence" value="ECO:0007669"/>
    <property type="project" value="InterPro"/>
</dbReference>
<dbReference type="Gene3D" id="3.50.20.10">
    <property type="entry name" value="Pyruvoyl-Dependent Histidine Decarboxylase, subunit B"/>
    <property type="match status" value="1"/>
</dbReference>
<dbReference type="InterPro" id="IPR016104">
    <property type="entry name" value="Pyr-dep_his/arg-deCO2ase"/>
</dbReference>
<dbReference type="InterPro" id="IPR016105">
    <property type="entry name" value="Pyr-dep_his/arg-deCO2ase_sand"/>
</dbReference>
<dbReference type="InterPro" id="IPR002724">
    <property type="entry name" value="Pyruvoyl-dep_arg_deCO2ase"/>
</dbReference>
<dbReference type="PANTHER" id="PTHR40438">
    <property type="entry name" value="PYRUVOYL-DEPENDENT ARGININE DECARBOXYLASE"/>
    <property type="match status" value="1"/>
</dbReference>
<dbReference type="PANTHER" id="PTHR40438:SF1">
    <property type="entry name" value="PYRUVOYL-DEPENDENT ARGININE DECARBOXYLASE"/>
    <property type="match status" value="1"/>
</dbReference>
<dbReference type="Pfam" id="PF01862">
    <property type="entry name" value="PvlArgDC"/>
    <property type="match status" value="1"/>
</dbReference>
<dbReference type="PIRSF" id="PIRSF005216">
    <property type="entry name" value="Pyruvoyl-dep_arg_deCO2ase"/>
    <property type="match status" value="1"/>
</dbReference>
<dbReference type="SFLD" id="SFLDG01170">
    <property type="entry name" value="Pyruvoyl-dependent_arginine_de"/>
    <property type="match status" value="1"/>
</dbReference>
<dbReference type="SFLD" id="SFLDS00055">
    <property type="entry name" value="Pyruvoyl-Dependent_Histidine/A"/>
    <property type="match status" value="1"/>
</dbReference>
<dbReference type="SUPFAM" id="SSF56271">
    <property type="entry name" value="Pyruvoyl-dependent histidine and arginine decarboxylases"/>
    <property type="match status" value="1"/>
</dbReference>
<comment type="catalytic activity">
    <reaction>
        <text>L-arginine + H(+) = agmatine + CO2</text>
        <dbReference type="Rhea" id="RHEA:17641"/>
        <dbReference type="ChEBI" id="CHEBI:15378"/>
        <dbReference type="ChEBI" id="CHEBI:16526"/>
        <dbReference type="ChEBI" id="CHEBI:32682"/>
        <dbReference type="ChEBI" id="CHEBI:58145"/>
        <dbReference type="EC" id="4.1.1.19"/>
    </reaction>
</comment>
<comment type="cofactor">
    <cofactor evidence="1">
        <name>pyruvate</name>
        <dbReference type="ChEBI" id="CHEBI:15361"/>
    </cofactor>
    <text evidence="1">Binds 1 pyruvoyl group covalently per subunit.</text>
</comment>
<comment type="similarity">
    <text evidence="2">Belongs to the PdaD family.</text>
</comment>
<evidence type="ECO:0000250" key="1"/>
<evidence type="ECO:0000305" key="2"/>
<name>PDAD_HALS3</name>
<gene>
    <name type="primary">pdaD</name>
    <name type="ordered locus">OE_3803R</name>
</gene>
<accession>B0R6U7</accession>
<proteinExistence type="inferred from homology"/>
<sequence length="160" mass="16364">MPRIRIAWGSGVAPTEMAAYDAALADANVHNYNLIRVSSVIPADATVSPVDTAPDLGPAGNTLTVVEARGQTAGPGQASAGLAWAPRDGAPGLFYEAADETTPDDVADRVTTGITAGMDVRDWDGVEPSVRTETVTADAGEHAAAVVIAAYGDSDPVFDQ</sequence>